<accession>B2VF45</accession>
<feature type="chain" id="PRO_1000101116" description="Lysine--tRNA ligase">
    <location>
        <begin position="1"/>
        <end position="506"/>
    </location>
</feature>
<feature type="binding site" evidence="1">
    <location>
        <position position="415"/>
    </location>
    <ligand>
        <name>Mg(2+)</name>
        <dbReference type="ChEBI" id="CHEBI:18420"/>
        <label>1</label>
    </ligand>
</feature>
<feature type="binding site" evidence="1">
    <location>
        <position position="422"/>
    </location>
    <ligand>
        <name>Mg(2+)</name>
        <dbReference type="ChEBI" id="CHEBI:18420"/>
        <label>1</label>
    </ligand>
</feature>
<feature type="binding site" evidence="1">
    <location>
        <position position="422"/>
    </location>
    <ligand>
        <name>Mg(2+)</name>
        <dbReference type="ChEBI" id="CHEBI:18420"/>
        <label>2</label>
    </ligand>
</feature>
<protein>
    <recommendedName>
        <fullName evidence="1">Lysine--tRNA ligase</fullName>
        <ecNumber evidence="1">6.1.1.6</ecNumber>
    </recommendedName>
    <alternativeName>
        <fullName evidence="1">Lysyl-tRNA synthetase</fullName>
        <shortName evidence="1">LysRS</shortName>
    </alternativeName>
</protein>
<proteinExistence type="inferred from homology"/>
<keyword id="KW-0030">Aminoacyl-tRNA synthetase</keyword>
<keyword id="KW-0067">ATP-binding</keyword>
<keyword id="KW-0963">Cytoplasm</keyword>
<keyword id="KW-0436">Ligase</keyword>
<keyword id="KW-0460">Magnesium</keyword>
<keyword id="KW-0479">Metal-binding</keyword>
<keyword id="KW-0547">Nucleotide-binding</keyword>
<keyword id="KW-0648">Protein biosynthesis</keyword>
<keyword id="KW-1185">Reference proteome</keyword>
<sequence>MSEQQPQAPDAALELNNELKARREKLVALRATGLAFPNDFRRDRTSDQLHAEFDGKENEELEALGIEVSVAGRMMTRRIMGKASFVTLQDVGGRIQLYVSRDDLAEGIYNEQFKKWDLGDILGARGKLFKTKTGELSIHCSELRLLTKALRPLPDKFHGLADQETRYRQRYLDLIANDDSRNTFKIRSQIMAGIRSFMVDRDFMEVETPMMQAIPGGASARPFITHHNALDLDMYLRIAPELYLKRLVVGGFDRVFEINRNFRNEGISPRHNPEFTMMELYMAYADYKDLIELTESLFRTLAQDVLGSTVVPYGDQQFDFGKPFEKLTMKEAILKYRPQTDLADLADFDKSVAIAQSLGIKVEKSWGLGRLVTEIFEETAEAHLIQPTFITEYPAEVSPLARRNDMDPEITDRFEFFIGGREIGNGFSELNDAQDQAERFLQQVNAKDAGDDEAMFYDEDYVTALEHGLPPTAGLGIGIDRMVMLFTNSHTIRDVILFPALRPGSK</sequence>
<evidence type="ECO:0000255" key="1">
    <source>
        <dbReference type="HAMAP-Rule" id="MF_00252"/>
    </source>
</evidence>
<comment type="catalytic activity">
    <reaction evidence="1">
        <text>tRNA(Lys) + L-lysine + ATP = L-lysyl-tRNA(Lys) + AMP + diphosphate</text>
        <dbReference type="Rhea" id="RHEA:20792"/>
        <dbReference type="Rhea" id="RHEA-COMP:9696"/>
        <dbReference type="Rhea" id="RHEA-COMP:9697"/>
        <dbReference type="ChEBI" id="CHEBI:30616"/>
        <dbReference type="ChEBI" id="CHEBI:32551"/>
        <dbReference type="ChEBI" id="CHEBI:33019"/>
        <dbReference type="ChEBI" id="CHEBI:78442"/>
        <dbReference type="ChEBI" id="CHEBI:78529"/>
        <dbReference type="ChEBI" id="CHEBI:456215"/>
        <dbReference type="EC" id="6.1.1.6"/>
    </reaction>
</comment>
<comment type="cofactor">
    <cofactor evidence="1">
        <name>Mg(2+)</name>
        <dbReference type="ChEBI" id="CHEBI:18420"/>
    </cofactor>
    <text evidence="1">Binds 3 Mg(2+) ions per subunit.</text>
</comment>
<comment type="subunit">
    <text evidence="1">Homodimer.</text>
</comment>
<comment type="subcellular location">
    <subcellularLocation>
        <location evidence="1">Cytoplasm</location>
    </subcellularLocation>
</comment>
<comment type="similarity">
    <text evidence="1">Belongs to the class-II aminoacyl-tRNA synthetase family.</text>
</comment>
<organism>
    <name type="scientific">Erwinia tasmaniensis (strain DSM 17950 / CFBP 7177 / CIP 109463 / NCPPB 4357 / Et1/99)</name>
    <dbReference type="NCBI Taxonomy" id="465817"/>
    <lineage>
        <taxon>Bacteria</taxon>
        <taxon>Pseudomonadati</taxon>
        <taxon>Pseudomonadota</taxon>
        <taxon>Gammaproteobacteria</taxon>
        <taxon>Enterobacterales</taxon>
        <taxon>Erwiniaceae</taxon>
        <taxon>Erwinia</taxon>
    </lineage>
</organism>
<gene>
    <name evidence="1" type="primary">lysS</name>
    <name type="ordered locus">ETA_27820</name>
</gene>
<name>SYK_ERWT9</name>
<reference key="1">
    <citation type="journal article" date="2008" name="Environ. Microbiol.">
        <title>The genome of Erwinia tasmaniensis strain Et1/99, a non-pathogenic bacterium in the genus Erwinia.</title>
        <authorList>
            <person name="Kube M."/>
            <person name="Migdoll A.M."/>
            <person name="Mueller I."/>
            <person name="Kuhl H."/>
            <person name="Beck A."/>
            <person name="Reinhardt R."/>
            <person name="Geider K."/>
        </authorList>
    </citation>
    <scope>NUCLEOTIDE SEQUENCE [LARGE SCALE GENOMIC DNA]</scope>
    <source>
        <strain>DSM 17950 / CFBP 7177 / CIP 109463 / NCPPB 4357 / Et1/99</strain>
    </source>
</reference>
<dbReference type="EC" id="6.1.1.6" evidence="1"/>
<dbReference type="EMBL" id="CU468135">
    <property type="protein sequence ID" value="CAO97828.1"/>
    <property type="molecule type" value="Genomic_DNA"/>
</dbReference>
<dbReference type="RefSeq" id="WP_012442485.1">
    <property type="nucleotide sequence ID" value="NC_010694.1"/>
</dbReference>
<dbReference type="SMR" id="B2VF45"/>
<dbReference type="STRING" id="465817.ETA_27820"/>
<dbReference type="KEGG" id="eta:ETA_27820"/>
<dbReference type="eggNOG" id="COG1190">
    <property type="taxonomic scope" value="Bacteria"/>
</dbReference>
<dbReference type="HOGENOM" id="CLU_008255_6_0_6"/>
<dbReference type="OrthoDB" id="9802326at2"/>
<dbReference type="Proteomes" id="UP000001726">
    <property type="component" value="Chromosome"/>
</dbReference>
<dbReference type="GO" id="GO:0005829">
    <property type="term" value="C:cytosol"/>
    <property type="evidence" value="ECO:0007669"/>
    <property type="project" value="TreeGrafter"/>
</dbReference>
<dbReference type="GO" id="GO:0005524">
    <property type="term" value="F:ATP binding"/>
    <property type="evidence" value="ECO:0007669"/>
    <property type="project" value="UniProtKB-UniRule"/>
</dbReference>
<dbReference type="GO" id="GO:0004824">
    <property type="term" value="F:lysine-tRNA ligase activity"/>
    <property type="evidence" value="ECO:0007669"/>
    <property type="project" value="UniProtKB-UniRule"/>
</dbReference>
<dbReference type="GO" id="GO:0000287">
    <property type="term" value="F:magnesium ion binding"/>
    <property type="evidence" value="ECO:0007669"/>
    <property type="project" value="UniProtKB-UniRule"/>
</dbReference>
<dbReference type="GO" id="GO:0000049">
    <property type="term" value="F:tRNA binding"/>
    <property type="evidence" value="ECO:0007669"/>
    <property type="project" value="TreeGrafter"/>
</dbReference>
<dbReference type="GO" id="GO:0006430">
    <property type="term" value="P:lysyl-tRNA aminoacylation"/>
    <property type="evidence" value="ECO:0007669"/>
    <property type="project" value="UniProtKB-UniRule"/>
</dbReference>
<dbReference type="CDD" id="cd00775">
    <property type="entry name" value="LysRS_core"/>
    <property type="match status" value="1"/>
</dbReference>
<dbReference type="CDD" id="cd04322">
    <property type="entry name" value="LysRS_N"/>
    <property type="match status" value="1"/>
</dbReference>
<dbReference type="FunFam" id="2.40.50.140:FF:000024">
    <property type="entry name" value="Lysine--tRNA ligase"/>
    <property type="match status" value="1"/>
</dbReference>
<dbReference type="FunFam" id="3.30.930.10:FF:000001">
    <property type="entry name" value="Lysine--tRNA ligase"/>
    <property type="match status" value="1"/>
</dbReference>
<dbReference type="Gene3D" id="3.30.930.10">
    <property type="entry name" value="Bira Bifunctional Protein, Domain 2"/>
    <property type="match status" value="1"/>
</dbReference>
<dbReference type="Gene3D" id="2.40.50.140">
    <property type="entry name" value="Nucleic acid-binding proteins"/>
    <property type="match status" value="1"/>
</dbReference>
<dbReference type="HAMAP" id="MF_00252">
    <property type="entry name" value="Lys_tRNA_synth_class2"/>
    <property type="match status" value="1"/>
</dbReference>
<dbReference type="InterPro" id="IPR004364">
    <property type="entry name" value="Aa-tRNA-synt_II"/>
</dbReference>
<dbReference type="InterPro" id="IPR006195">
    <property type="entry name" value="aa-tRNA-synth_II"/>
</dbReference>
<dbReference type="InterPro" id="IPR045864">
    <property type="entry name" value="aa-tRNA-synth_II/BPL/LPL"/>
</dbReference>
<dbReference type="InterPro" id="IPR002313">
    <property type="entry name" value="Lys-tRNA-ligase_II"/>
</dbReference>
<dbReference type="InterPro" id="IPR034762">
    <property type="entry name" value="Lys-tRNA-ligase_II_bac/euk"/>
</dbReference>
<dbReference type="InterPro" id="IPR044136">
    <property type="entry name" value="Lys-tRNA-ligase_II_N"/>
</dbReference>
<dbReference type="InterPro" id="IPR018149">
    <property type="entry name" value="Lys-tRNA-synth_II_C"/>
</dbReference>
<dbReference type="InterPro" id="IPR012340">
    <property type="entry name" value="NA-bd_OB-fold"/>
</dbReference>
<dbReference type="InterPro" id="IPR004365">
    <property type="entry name" value="NA-bd_OB_tRNA"/>
</dbReference>
<dbReference type="NCBIfam" id="TIGR00499">
    <property type="entry name" value="lysS_bact"/>
    <property type="match status" value="1"/>
</dbReference>
<dbReference type="NCBIfam" id="NF001756">
    <property type="entry name" value="PRK00484.1"/>
    <property type="match status" value="1"/>
</dbReference>
<dbReference type="NCBIfam" id="NF009101">
    <property type="entry name" value="PRK12445.1"/>
    <property type="match status" value="1"/>
</dbReference>
<dbReference type="PANTHER" id="PTHR42918:SF15">
    <property type="entry name" value="LYSINE--TRNA LIGASE, CHLOROPLASTIC_MITOCHONDRIAL"/>
    <property type="match status" value="1"/>
</dbReference>
<dbReference type="PANTHER" id="PTHR42918">
    <property type="entry name" value="LYSYL-TRNA SYNTHETASE"/>
    <property type="match status" value="1"/>
</dbReference>
<dbReference type="Pfam" id="PF00152">
    <property type="entry name" value="tRNA-synt_2"/>
    <property type="match status" value="1"/>
</dbReference>
<dbReference type="Pfam" id="PF01336">
    <property type="entry name" value="tRNA_anti-codon"/>
    <property type="match status" value="1"/>
</dbReference>
<dbReference type="PIRSF" id="PIRSF039101">
    <property type="entry name" value="LysRS2"/>
    <property type="match status" value="1"/>
</dbReference>
<dbReference type="PRINTS" id="PR00982">
    <property type="entry name" value="TRNASYNTHLYS"/>
</dbReference>
<dbReference type="SUPFAM" id="SSF55681">
    <property type="entry name" value="Class II aaRS and biotin synthetases"/>
    <property type="match status" value="1"/>
</dbReference>
<dbReference type="SUPFAM" id="SSF50249">
    <property type="entry name" value="Nucleic acid-binding proteins"/>
    <property type="match status" value="1"/>
</dbReference>
<dbReference type="PROSITE" id="PS50862">
    <property type="entry name" value="AA_TRNA_LIGASE_II"/>
    <property type="match status" value="1"/>
</dbReference>